<comment type="function">
    <text evidence="1">Catalyzes the attachment of serine to tRNA(Ser). Is also able to aminoacylate tRNA(Sec) with serine, to form the misacylated tRNA L-seryl-tRNA(Sec), which will be further converted into selenocysteinyl-tRNA(Sec).</text>
</comment>
<comment type="catalytic activity">
    <reaction evidence="1">
        <text>tRNA(Ser) + L-serine + ATP = L-seryl-tRNA(Ser) + AMP + diphosphate + H(+)</text>
        <dbReference type="Rhea" id="RHEA:12292"/>
        <dbReference type="Rhea" id="RHEA-COMP:9669"/>
        <dbReference type="Rhea" id="RHEA-COMP:9703"/>
        <dbReference type="ChEBI" id="CHEBI:15378"/>
        <dbReference type="ChEBI" id="CHEBI:30616"/>
        <dbReference type="ChEBI" id="CHEBI:33019"/>
        <dbReference type="ChEBI" id="CHEBI:33384"/>
        <dbReference type="ChEBI" id="CHEBI:78442"/>
        <dbReference type="ChEBI" id="CHEBI:78533"/>
        <dbReference type="ChEBI" id="CHEBI:456215"/>
        <dbReference type="EC" id="6.1.1.11"/>
    </reaction>
</comment>
<comment type="catalytic activity">
    <reaction evidence="1">
        <text>tRNA(Sec) + L-serine + ATP = L-seryl-tRNA(Sec) + AMP + diphosphate + H(+)</text>
        <dbReference type="Rhea" id="RHEA:42580"/>
        <dbReference type="Rhea" id="RHEA-COMP:9742"/>
        <dbReference type="Rhea" id="RHEA-COMP:10128"/>
        <dbReference type="ChEBI" id="CHEBI:15378"/>
        <dbReference type="ChEBI" id="CHEBI:30616"/>
        <dbReference type="ChEBI" id="CHEBI:33019"/>
        <dbReference type="ChEBI" id="CHEBI:33384"/>
        <dbReference type="ChEBI" id="CHEBI:78442"/>
        <dbReference type="ChEBI" id="CHEBI:78533"/>
        <dbReference type="ChEBI" id="CHEBI:456215"/>
        <dbReference type="EC" id="6.1.1.11"/>
    </reaction>
</comment>
<comment type="pathway">
    <text evidence="1">Aminoacyl-tRNA biosynthesis; selenocysteinyl-tRNA(Sec) biosynthesis; L-seryl-tRNA(Sec) from L-serine and tRNA(Sec): step 1/1.</text>
</comment>
<comment type="subunit">
    <text evidence="1">Homodimer. The tRNA molecule binds across the dimer.</text>
</comment>
<comment type="subcellular location">
    <subcellularLocation>
        <location evidence="1">Cytoplasm</location>
    </subcellularLocation>
</comment>
<comment type="domain">
    <text evidence="1">Consists of two distinct domains, a catalytic core and a N-terminal extension that is involved in tRNA binding.</text>
</comment>
<comment type="similarity">
    <text evidence="1">Belongs to the class-II aminoacyl-tRNA synthetase family. Type-1 seryl-tRNA synthetase subfamily.</text>
</comment>
<reference key="1">
    <citation type="submission" date="2007-06" db="EMBL/GenBank/DDBJ databases">
        <title>Complete sequence of Sinorhizobium medicae WSM419 chromosome.</title>
        <authorList>
            <consortium name="US DOE Joint Genome Institute"/>
            <person name="Copeland A."/>
            <person name="Lucas S."/>
            <person name="Lapidus A."/>
            <person name="Barry K."/>
            <person name="Glavina del Rio T."/>
            <person name="Dalin E."/>
            <person name="Tice H."/>
            <person name="Pitluck S."/>
            <person name="Chain P."/>
            <person name="Malfatti S."/>
            <person name="Shin M."/>
            <person name="Vergez L."/>
            <person name="Schmutz J."/>
            <person name="Larimer F."/>
            <person name="Land M."/>
            <person name="Hauser L."/>
            <person name="Kyrpides N."/>
            <person name="Mikhailova N."/>
            <person name="Reeve W.G."/>
            <person name="Richardson P."/>
        </authorList>
    </citation>
    <scope>NUCLEOTIDE SEQUENCE [LARGE SCALE GENOMIC DNA]</scope>
    <source>
        <strain>WSM419</strain>
    </source>
</reference>
<organism>
    <name type="scientific">Sinorhizobium medicae (strain WSM419)</name>
    <name type="common">Ensifer medicae</name>
    <dbReference type="NCBI Taxonomy" id="366394"/>
    <lineage>
        <taxon>Bacteria</taxon>
        <taxon>Pseudomonadati</taxon>
        <taxon>Pseudomonadota</taxon>
        <taxon>Alphaproteobacteria</taxon>
        <taxon>Hyphomicrobiales</taxon>
        <taxon>Rhizobiaceae</taxon>
        <taxon>Sinorhizobium/Ensifer group</taxon>
        <taxon>Sinorhizobium</taxon>
    </lineage>
</organism>
<dbReference type="EC" id="6.1.1.11" evidence="1"/>
<dbReference type="EMBL" id="CP000738">
    <property type="protein sequence ID" value="ABR60018.1"/>
    <property type="molecule type" value="Genomic_DNA"/>
</dbReference>
<dbReference type="RefSeq" id="WP_011975337.1">
    <property type="nucleotide sequence ID" value="NC_009636.1"/>
</dbReference>
<dbReference type="RefSeq" id="YP_001326853.1">
    <property type="nucleotide sequence ID" value="NC_009636.1"/>
</dbReference>
<dbReference type="SMR" id="A6U8N8"/>
<dbReference type="STRING" id="366394.Smed_1167"/>
<dbReference type="GeneID" id="61612053"/>
<dbReference type="KEGG" id="smd:Smed_1167"/>
<dbReference type="PATRIC" id="fig|366394.8.peg.4293"/>
<dbReference type="eggNOG" id="COG0172">
    <property type="taxonomic scope" value="Bacteria"/>
</dbReference>
<dbReference type="HOGENOM" id="CLU_023797_1_1_5"/>
<dbReference type="OrthoDB" id="9804647at2"/>
<dbReference type="UniPathway" id="UPA00906">
    <property type="reaction ID" value="UER00895"/>
</dbReference>
<dbReference type="Proteomes" id="UP000001108">
    <property type="component" value="Chromosome"/>
</dbReference>
<dbReference type="GO" id="GO:0005737">
    <property type="term" value="C:cytoplasm"/>
    <property type="evidence" value="ECO:0007669"/>
    <property type="project" value="UniProtKB-SubCell"/>
</dbReference>
<dbReference type="GO" id="GO:0005524">
    <property type="term" value="F:ATP binding"/>
    <property type="evidence" value="ECO:0007669"/>
    <property type="project" value="UniProtKB-UniRule"/>
</dbReference>
<dbReference type="GO" id="GO:0004828">
    <property type="term" value="F:serine-tRNA ligase activity"/>
    <property type="evidence" value="ECO:0007669"/>
    <property type="project" value="UniProtKB-UniRule"/>
</dbReference>
<dbReference type="GO" id="GO:0016260">
    <property type="term" value="P:selenocysteine biosynthetic process"/>
    <property type="evidence" value="ECO:0007669"/>
    <property type="project" value="UniProtKB-UniRule"/>
</dbReference>
<dbReference type="GO" id="GO:0006434">
    <property type="term" value="P:seryl-tRNA aminoacylation"/>
    <property type="evidence" value="ECO:0007669"/>
    <property type="project" value="UniProtKB-UniRule"/>
</dbReference>
<dbReference type="CDD" id="cd00770">
    <property type="entry name" value="SerRS_core"/>
    <property type="match status" value="1"/>
</dbReference>
<dbReference type="Gene3D" id="3.30.930.10">
    <property type="entry name" value="Bira Bifunctional Protein, Domain 2"/>
    <property type="match status" value="1"/>
</dbReference>
<dbReference type="Gene3D" id="1.10.287.40">
    <property type="entry name" value="Serine-tRNA synthetase, tRNA binding domain"/>
    <property type="match status" value="1"/>
</dbReference>
<dbReference type="HAMAP" id="MF_00176">
    <property type="entry name" value="Ser_tRNA_synth_type1"/>
    <property type="match status" value="1"/>
</dbReference>
<dbReference type="InterPro" id="IPR002314">
    <property type="entry name" value="aa-tRNA-synt_IIb"/>
</dbReference>
<dbReference type="InterPro" id="IPR006195">
    <property type="entry name" value="aa-tRNA-synth_II"/>
</dbReference>
<dbReference type="InterPro" id="IPR045864">
    <property type="entry name" value="aa-tRNA-synth_II/BPL/LPL"/>
</dbReference>
<dbReference type="InterPro" id="IPR002317">
    <property type="entry name" value="Ser-tRNA-ligase_type_1"/>
</dbReference>
<dbReference type="InterPro" id="IPR015866">
    <property type="entry name" value="Ser-tRNA-synth_1_N"/>
</dbReference>
<dbReference type="InterPro" id="IPR042103">
    <property type="entry name" value="SerRS_1_N_sf"/>
</dbReference>
<dbReference type="InterPro" id="IPR033729">
    <property type="entry name" value="SerRS_core"/>
</dbReference>
<dbReference type="InterPro" id="IPR010978">
    <property type="entry name" value="tRNA-bd_arm"/>
</dbReference>
<dbReference type="NCBIfam" id="TIGR00414">
    <property type="entry name" value="serS"/>
    <property type="match status" value="1"/>
</dbReference>
<dbReference type="PANTHER" id="PTHR43697:SF1">
    <property type="entry name" value="SERINE--TRNA LIGASE"/>
    <property type="match status" value="1"/>
</dbReference>
<dbReference type="PANTHER" id="PTHR43697">
    <property type="entry name" value="SERYL-TRNA SYNTHETASE"/>
    <property type="match status" value="1"/>
</dbReference>
<dbReference type="Pfam" id="PF02403">
    <property type="entry name" value="Seryl_tRNA_N"/>
    <property type="match status" value="1"/>
</dbReference>
<dbReference type="Pfam" id="PF00587">
    <property type="entry name" value="tRNA-synt_2b"/>
    <property type="match status" value="1"/>
</dbReference>
<dbReference type="PIRSF" id="PIRSF001529">
    <property type="entry name" value="Ser-tRNA-synth_IIa"/>
    <property type="match status" value="1"/>
</dbReference>
<dbReference type="PRINTS" id="PR00981">
    <property type="entry name" value="TRNASYNTHSER"/>
</dbReference>
<dbReference type="SUPFAM" id="SSF55681">
    <property type="entry name" value="Class II aaRS and biotin synthetases"/>
    <property type="match status" value="1"/>
</dbReference>
<dbReference type="SUPFAM" id="SSF46589">
    <property type="entry name" value="tRNA-binding arm"/>
    <property type="match status" value="1"/>
</dbReference>
<dbReference type="PROSITE" id="PS50862">
    <property type="entry name" value="AA_TRNA_LIGASE_II"/>
    <property type="match status" value="1"/>
</dbReference>
<protein>
    <recommendedName>
        <fullName evidence="1">Serine--tRNA ligase</fullName>
        <ecNumber evidence="1">6.1.1.11</ecNumber>
    </recommendedName>
    <alternativeName>
        <fullName evidence="1">Seryl-tRNA synthetase</fullName>
        <shortName evidence="1">SerRS</shortName>
    </alternativeName>
    <alternativeName>
        <fullName evidence="1">Seryl-tRNA(Ser/Sec) synthetase</fullName>
    </alternativeName>
</protein>
<name>SYS_SINMW</name>
<accession>A6U8N8</accession>
<proteinExistence type="inferred from homology"/>
<sequence>MLDIKWIRENADVLDSALAKRGAGPLSASLIALDERRRTILQSLQDMQSRRNAASKEIGAAMAQKNSELADRLKAEVAELKTTLPAAEEESRRIEAELTDALSRIPNAPLDDVPVGADESANVVTRVVGAKPTWNHKPLEHFEIGEALGLMDFEGAARIAGSRFTILKGQLARLERALGQFMLDLHTGEHGYIEVQPPLLVRDDAMYGTGQLPKFTDDLFRTTDGRWLIPTAEVPLTNMVREQILDGEKLPLRFTALTPCFRSEAGSAGRDTRGMLRQHQFNKVELVSITDAESALDEHERMTACAEEVLKRLGLHYRVMTLCTGDMGFSARKTYDLEVWLPGQDAYREISSCSVCGDFQGRRMNARYRGKEEKGTKFAHTLNGSGVALGRALIAVIENYLNEDGSITVPDALIAYMGGLRRIEKAA</sequence>
<feature type="chain" id="PRO_1000019824" description="Serine--tRNA ligase">
    <location>
        <begin position="1"/>
        <end position="427"/>
    </location>
</feature>
<feature type="binding site" evidence="1">
    <location>
        <begin position="231"/>
        <end position="233"/>
    </location>
    <ligand>
        <name>L-serine</name>
        <dbReference type="ChEBI" id="CHEBI:33384"/>
    </ligand>
</feature>
<feature type="binding site" evidence="1">
    <location>
        <begin position="262"/>
        <end position="264"/>
    </location>
    <ligand>
        <name>ATP</name>
        <dbReference type="ChEBI" id="CHEBI:30616"/>
    </ligand>
</feature>
<feature type="binding site" evidence="1">
    <location>
        <position position="285"/>
    </location>
    <ligand>
        <name>L-serine</name>
        <dbReference type="ChEBI" id="CHEBI:33384"/>
    </ligand>
</feature>
<feature type="binding site" evidence="1">
    <location>
        <begin position="349"/>
        <end position="352"/>
    </location>
    <ligand>
        <name>ATP</name>
        <dbReference type="ChEBI" id="CHEBI:30616"/>
    </ligand>
</feature>
<feature type="binding site" evidence="1">
    <location>
        <position position="385"/>
    </location>
    <ligand>
        <name>L-serine</name>
        <dbReference type="ChEBI" id="CHEBI:33384"/>
    </ligand>
</feature>
<evidence type="ECO:0000255" key="1">
    <source>
        <dbReference type="HAMAP-Rule" id="MF_00176"/>
    </source>
</evidence>
<gene>
    <name evidence="1" type="primary">serS</name>
    <name type="ordered locus">Smed_1167</name>
</gene>
<keyword id="KW-0030">Aminoacyl-tRNA synthetase</keyword>
<keyword id="KW-0067">ATP-binding</keyword>
<keyword id="KW-0963">Cytoplasm</keyword>
<keyword id="KW-0436">Ligase</keyword>
<keyword id="KW-0547">Nucleotide-binding</keyword>
<keyword id="KW-0648">Protein biosynthesis</keyword>